<name>ARGR_THEP1</name>
<reference key="1">
    <citation type="submission" date="2007-05" db="EMBL/GenBank/DDBJ databases">
        <title>Complete sequence of Thermotoga petrophila RKU-1.</title>
        <authorList>
            <consortium name="US DOE Joint Genome Institute"/>
            <person name="Copeland A."/>
            <person name="Lucas S."/>
            <person name="Lapidus A."/>
            <person name="Barry K."/>
            <person name="Glavina del Rio T."/>
            <person name="Dalin E."/>
            <person name="Tice H."/>
            <person name="Pitluck S."/>
            <person name="Sims D."/>
            <person name="Brettin T."/>
            <person name="Bruce D."/>
            <person name="Detter J.C."/>
            <person name="Han C."/>
            <person name="Tapia R."/>
            <person name="Schmutz J."/>
            <person name="Larimer F."/>
            <person name="Land M."/>
            <person name="Hauser L."/>
            <person name="Kyrpides N."/>
            <person name="Mikhailova N."/>
            <person name="Nelson K."/>
            <person name="Gogarten J.P."/>
            <person name="Noll K."/>
            <person name="Richardson P."/>
        </authorList>
    </citation>
    <scope>NUCLEOTIDE SEQUENCE [LARGE SCALE GENOMIC DNA]</scope>
    <source>
        <strain>ATCC BAA-488 / DSM 13995 / JCM 10881 / RKU-1</strain>
    </source>
</reference>
<feature type="chain" id="PRO_1000023610" description="Arginine repressor">
    <location>
        <begin position="1"/>
        <end position="152"/>
    </location>
</feature>
<gene>
    <name evidence="1" type="primary">argR</name>
    <name type="ordered locus">Tpet_0546</name>
</gene>
<proteinExistence type="inferred from homology"/>
<organism>
    <name type="scientific">Thermotoga petrophila (strain ATCC BAA-488 / DSM 13995 / JCM 10881 / RKU-1)</name>
    <dbReference type="NCBI Taxonomy" id="390874"/>
    <lineage>
        <taxon>Bacteria</taxon>
        <taxon>Thermotogati</taxon>
        <taxon>Thermotogota</taxon>
        <taxon>Thermotogae</taxon>
        <taxon>Thermotogales</taxon>
        <taxon>Thermotogaceae</taxon>
        <taxon>Thermotoga</taxon>
    </lineage>
</organism>
<keyword id="KW-0028">Amino-acid biosynthesis</keyword>
<keyword id="KW-0055">Arginine biosynthesis</keyword>
<keyword id="KW-0963">Cytoplasm</keyword>
<keyword id="KW-0238">DNA-binding</keyword>
<keyword id="KW-0678">Repressor</keyword>
<keyword id="KW-0804">Transcription</keyword>
<keyword id="KW-0805">Transcription regulation</keyword>
<protein>
    <recommendedName>
        <fullName evidence="1">Arginine repressor</fullName>
    </recommendedName>
</protein>
<evidence type="ECO:0000255" key="1">
    <source>
        <dbReference type="HAMAP-Rule" id="MF_00173"/>
    </source>
</evidence>
<dbReference type="EMBL" id="CP000702">
    <property type="protein sequence ID" value="ABQ46567.1"/>
    <property type="molecule type" value="Genomic_DNA"/>
</dbReference>
<dbReference type="RefSeq" id="WP_004083185.1">
    <property type="nucleotide sequence ID" value="NC_009486.1"/>
</dbReference>
<dbReference type="SMR" id="A5IK44"/>
<dbReference type="STRING" id="390874.Tpet_0546"/>
<dbReference type="KEGG" id="tpt:Tpet_0546"/>
<dbReference type="eggNOG" id="COG1438">
    <property type="taxonomic scope" value="Bacteria"/>
</dbReference>
<dbReference type="HOGENOM" id="CLU_097103_0_0_0"/>
<dbReference type="UniPathway" id="UPA00068"/>
<dbReference type="Proteomes" id="UP000006558">
    <property type="component" value="Chromosome"/>
</dbReference>
<dbReference type="GO" id="GO:0005737">
    <property type="term" value="C:cytoplasm"/>
    <property type="evidence" value="ECO:0007669"/>
    <property type="project" value="UniProtKB-SubCell"/>
</dbReference>
<dbReference type="GO" id="GO:0034618">
    <property type="term" value="F:arginine binding"/>
    <property type="evidence" value="ECO:0007669"/>
    <property type="project" value="InterPro"/>
</dbReference>
<dbReference type="GO" id="GO:0003677">
    <property type="term" value="F:DNA binding"/>
    <property type="evidence" value="ECO:0007669"/>
    <property type="project" value="UniProtKB-KW"/>
</dbReference>
<dbReference type="GO" id="GO:0003700">
    <property type="term" value="F:DNA-binding transcription factor activity"/>
    <property type="evidence" value="ECO:0007669"/>
    <property type="project" value="UniProtKB-UniRule"/>
</dbReference>
<dbReference type="GO" id="GO:0006526">
    <property type="term" value="P:L-arginine biosynthetic process"/>
    <property type="evidence" value="ECO:0007669"/>
    <property type="project" value="UniProtKB-UniPathway"/>
</dbReference>
<dbReference type="GO" id="GO:0051259">
    <property type="term" value="P:protein complex oligomerization"/>
    <property type="evidence" value="ECO:0007669"/>
    <property type="project" value="InterPro"/>
</dbReference>
<dbReference type="GO" id="GO:1900079">
    <property type="term" value="P:regulation of arginine biosynthetic process"/>
    <property type="evidence" value="ECO:0007669"/>
    <property type="project" value="UniProtKB-UniRule"/>
</dbReference>
<dbReference type="Gene3D" id="3.30.1360.40">
    <property type="match status" value="1"/>
</dbReference>
<dbReference type="Gene3D" id="1.10.10.10">
    <property type="entry name" value="Winged helix-like DNA-binding domain superfamily/Winged helix DNA-binding domain"/>
    <property type="match status" value="1"/>
</dbReference>
<dbReference type="HAMAP" id="MF_00173">
    <property type="entry name" value="Arg_repressor"/>
    <property type="match status" value="1"/>
</dbReference>
<dbReference type="InterPro" id="IPR001669">
    <property type="entry name" value="Arg_repress"/>
</dbReference>
<dbReference type="InterPro" id="IPR020899">
    <property type="entry name" value="Arg_repress_C"/>
</dbReference>
<dbReference type="InterPro" id="IPR036251">
    <property type="entry name" value="Arg_repress_C_sf"/>
</dbReference>
<dbReference type="InterPro" id="IPR020900">
    <property type="entry name" value="Arg_repress_DNA-bd"/>
</dbReference>
<dbReference type="InterPro" id="IPR036388">
    <property type="entry name" value="WH-like_DNA-bd_sf"/>
</dbReference>
<dbReference type="InterPro" id="IPR036390">
    <property type="entry name" value="WH_DNA-bd_sf"/>
</dbReference>
<dbReference type="NCBIfam" id="TIGR01529">
    <property type="entry name" value="argR_whole"/>
    <property type="match status" value="1"/>
</dbReference>
<dbReference type="PANTHER" id="PTHR34471">
    <property type="entry name" value="ARGININE REPRESSOR"/>
    <property type="match status" value="1"/>
</dbReference>
<dbReference type="PANTHER" id="PTHR34471:SF1">
    <property type="entry name" value="ARGININE REPRESSOR"/>
    <property type="match status" value="1"/>
</dbReference>
<dbReference type="Pfam" id="PF01316">
    <property type="entry name" value="Arg_repressor"/>
    <property type="match status" value="1"/>
</dbReference>
<dbReference type="Pfam" id="PF02863">
    <property type="entry name" value="Arg_repressor_C"/>
    <property type="match status" value="1"/>
</dbReference>
<dbReference type="PRINTS" id="PR01467">
    <property type="entry name" value="ARGREPRESSOR"/>
</dbReference>
<dbReference type="SUPFAM" id="SSF55252">
    <property type="entry name" value="C-terminal domain of arginine repressor"/>
    <property type="match status" value="1"/>
</dbReference>
<dbReference type="SUPFAM" id="SSF46785">
    <property type="entry name" value="Winged helix' DNA-binding domain"/>
    <property type="match status" value="1"/>
</dbReference>
<accession>A5IK44</accession>
<comment type="function">
    <text evidence="1">Regulates arginine biosynthesis genes.</text>
</comment>
<comment type="pathway">
    <text>Amino-acid biosynthesis; L-arginine biosynthesis [regulation].</text>
</comment>
<comment type="subcellular location">
    <subcellularLocation>
        <location evidence="1">Cytoplasm</location>
    </subcellularLocation>
</comment>
<comment type="similarity">
    <text evidence="1">Belongs to the ArgR family.</text>
</comment>
<sequence>MKISKKRRQELIRKIIHEKKISNQFQIVEELKKYGIKAVQPTVARDLKEIGAVKIMDESGNYVYKLLDETPVIDPWKELKRNFKSFVESIDRAGNLIVIKTIPGTASGIARVIDRLDIDEIVGTLAGDDTIFVAVRDPESCEKIVEKLSSIL</sequence>